<organism>
    <name type="scientific">Staphylococcus aureus (strain MW2)</name>
    <dbReference type="NCBI Taxonomy" id="196620"/>
    <lineage>
        <taxon>Bacteria</taxon>
        <taxon>Bacillati</taxon>
        <taxon>Bacillota</taxon>
        <taxon>Bacilli</taxon>
        <taxon>Bacillales</taxon>
        <taxon>Staphylococcaceae</taxon>
        <taxon>Staphylococcus</taxon>
    </lineage>
</organism>
<reference key="1">
    <citation type="journal article" date="2002" name="Lancet">
        <title>Genome and virulence determinants of high virulence community-acquired MRSA.</title>
        <authorList>
            <person name="Baba T."/>
            <person name="Takeuchi F."/>
            <person name="Kuroda M."/>
            <person name="Yuzawa H."/>
            <person name="Aoki K."/>
            <person name="Oguchi A."/>
            <person name="Nagai Y."/>
            <person name="Iwama N."/>
            <person name="Asano K."/>
            <person name="Naimi T."/>
            <person name="Kuroda H."/>
            <person name="Cui L."/>
            <person name="Yamamoto K."/>
            <person name="Hiramatsu K."/>
        </authorList>
    </citation>
    <scope>NUCLEOTIDE SEQUENCE [LARGE SCALE GENOMIC DNA]</scope>
    <source>
        <strain>MW2</strain>
    </source>
</reference>
<feature type="chain" id="PRO_0000092078" description="Energy-coupling factor transporter ATP-binding protein EcfA1">
    <location>
        <begin position="1"/>
        <end position="269"/>
    </location>
</feature>
<feature type="domain" description="ABC transporter" evidence="1">
    <location>
        <begin position="8"/>
        <end position="242"/>
    </location>
</feature>
<feature type="binding site" evidence="1">
    <location>
        <begin position="42"/>
        <end position="49"/>
    </location>
    <ligand>
        <name>ATP</name>
        <dbReference type="ChEBI" id="CHEBI:30616"/>
    </ligand>
</feature>
<comment type="function">
    <text evidence="1">ATP-binding (A) component of a common energy-coupling factor (ECF) ABC-transporter complex. Unlike classic ABC transporters this ECF transporter provides the energy necessary to transport a number of different substrates.</text>
</comment>
<comment type="subunit">
    <text evidence="1">Forms a stable energy-coupling factor (ECF) transporter complex composed of 2 membrane-embedded substrate-binding proteins (S component), 2 ATP-binding proteins (A component) and 2 transmembrane proteins (T component).</text>
</comment>
<comment type="subcellular location">
    <subcellularLocation>
        <location evidence="1">Cell membrane</location>
        <topology evidence="1">Peripheral membrane protein</topology>
    </subcellularLocation>
</comment>
<comment type="similarity">
    <text evidence="1">Belongs to the ABC transporter superfamily. Energy-coupling factor EcfA family.</text>
</comment>
<dbReference type="EC" id="7.-.-.-" evidence="1"/>
<dbReference type="EMBL" id="BA000033">
    <property type="protein sequence ID" value="BAB96006.1"/>
    <property type="molecule type" value="Genomic_DNA"/>
</dbReference>
<dbReference type="RefSeq" id="WP_000389676.1">
    <property type="nucleotide sequence ID" value="NC_003923.1"/>
</dbReference>
<dbReference type="SMR" id="Q8NVB5"/>
<dbReference type="KEGG" id="sam:MW2141"/>
<dbReference type="HOGENOM" id="CLU_000604_1_22_9"/>
<dbReference type="GO" id="GO:0043190">
    <property type="term" value="C:ATP-binding cassette (ABC) transporter complex"/>
    <property type="evidence" value="ECO:0007669"/>
    <property type="project" value="TreeGrafter"/>
</dbReference>
<dbReference type="GO" id="GO:0005524">
    <property type="term" value="F:ATP binding"/>
    <property type="evidence" value="ECO:0007669"/>
    <property type="project" value="UniProtKB-KW"/>
</dbReference>
<dbReference type="GO" id="GO:0016887">
    <property type="term" value="F:ATP hydrolysis activity"/>
    <property type="evidence" value="ECO:0007669"/>
    <property type="project" value="InterPro"/>
</dbReference>
<dbReference type="GO" id="GO:0042626">
    <property type="term" value="F:ATPase-coupled transmembrane transporter activity"/>
    <property type="evidence" value="ECO:0007669"/>
    <property type="project" value="TreeGrafter"/>
</dbReference>
<dbReference type="CDD" id="cd03225">
    <property type="entry name" value="ABC_cobalt_CbiO_domain1"/>
    <property type="match status" value="1"/>
</dbReference>
<dbReference type="FunFam" id="3.40.50.300:FF:000224">
    <property type="entry name" value="Energy-coupling factor transporter ATP-binding protein EcfA"/>
    <property type="match status" value="1"/>
</dbReference>
<dbReference type="Gene3D" id="3.40.50.300">
    <property type="entry name" value="P-loop containing nucleotide triphosphate hydrolases"/>
    <property type="match status" value="1"/>
</dbReference>
<dbReference type="InterPro" id="IPR003593">
    <property type="entry name" value="AAA+_ATPase"/>
</dbReference>
<dbReference type="InterPro" id="IPR003439">
    <property type="entry name" value="ABC_transporter-like_ATP-bd"/>
</dbReference>
<dbReference type="InterPro" id="IPR017871">
    <property type="entry name" value="ABC_transporter-like_CS"/>
</dbReference>
<dbReference type="InterPro" id="IPR015856">
    <property type="entry name" value="ABC_transpr_CbiO/EcfA_su"/>
</dbReference>
<dbReference type="InterPro" id="IPR050095">
    <property type="entry name" value="ECF_ABC_transporter_ATP-bd"/>
</dbReference>
<dbReference type="InterPro" id="IPR030947">
    <property type="entry name" value="EcfA_1"/>
</dbReference>
<dbReference type="InterPro" id="IPR027417">
    <property type="entry name" value="P-loop_NTPase"/>
</dbReference>
<dbReference type="NCBIfam" id="TIGR04520">
    <property type="entry name" value="ECF_ATPase_1"/>
    <property type="match status" value="1"/>
</dbReference>
<dbReference type="NCBIfam" id="NF010167">
    <property type="entry name" value="PRK13648.1"/>
    <property type="match status" value="1"/>
</dbReference>
<dbReference type="PANTHER" id="PTHR43553:SF24">
    <property type="entry name" value="ENERGY-COUPLING FACTOR TRANSPORTER ATP-BINDING PROTEIN ECFA1"/>
    <property type="match status" value="1"/>
</dbReference>
<dbReference type="PANTHER" id="PTHR43553">
    <property type="entry name" value="HEAVY METAL TRANSPORTER"/>
    <property type="match status" value="1"/>
</dbReference>
<dbReference type="Pfam" id="PF00005">
    <property type="entry name" value="ABC_tran"/>
    <property type="match status" value="1"/>
</dbReference>
<dbReference type="SMART" id="SM00382">
    <property type="entry name" value="AAA"/>
    <property type="match status" value="1"/>
</dbReference>
<dbReference type="SUPFAM" id="SSF52540">
    <property type="entry name" value="P-loop containing nucleoside triphosphate hydrolases"/>
    <property type="match status" value="1"/>
</dbReference>
<dbReference type="PROSITE" id="PS00211">
    <property type="entry name" value="ABC_TRANSPORTER_1"/>
    <property type="match status" value="1"/>
</dbReference>
<dbReference type="PROSITE" id="PS50893">
    <property type="entry name" value="ABC_TRANSPORTER_2"/>
    <property type="match status" value="1"/>
</dbReference>
<dbReference type="PROSITE" id="PS51246">
    <property type="entry name" value="CBIO"/>
    <property type="match status" value="1"/>
</dbReference>
<proteinExistence type="inferred from homology"/>
<protein>
    <recommendedName>
        <fullName evidence="1">Energy-coupling factor transporter ATP-binding protein EcfA1</fullName>
        <shortName evidence="1">ECF transporter A component EcfA1</shortName>
        <ecNumber evidence="1">7.-.-.-</ecNumber>
    </recommendedName>
</protein>
<accession>Q8NVB5</accession>
<gene>
    <name evidence="1" type="primary">ecfA1</name>
    <name type="synonym">cbiO1</name>
    <name type="ordered locus">MW2141</name>
</gene>
<keyword id="KW-0067">ATP-binding</keyword>
<keyword id="KW-1003">Cell membrane</keyword>
<keyword id="KW-0472">Membrane</keyword>
<keyword id="KW-0547">Nucleotide-binding</keyword>
<keyword id="KW-1278">Translocase</keyword>
<keyword id="KW-0813">Transport</keyword>
<sequence length="269" mass="30003">MEDKNSVIVFKNVSFQYQSDASFTLKDVSFSIPKGQWTSIVGHNGSGKSTIAKLMIGIEKVKSGEIFYNNQTITDDNFEKLRKDIGIVFQNPDNQFVGSIVKYDVAFGLENHAVPHDEMHRRVGEALKQVDMLERADYEPNALSGGQKQRVAIASVLALNPSVIILDEATSMLDPDARQNLLDLVRKVKSEHNITIISITHDLSEAMEADHVIVMNKGTVYKEGTAIEIFDHAEELTTIGLDLPFPIKINQMLGYQTSFLTYEGLVDQL</sequence>
<name>ECFA1_STAAW</name>
<evidence type="ECO:0000255" key="1">
    <source>
        <dbReference type="HAMAP-Rule" id="MF_01710"/>
    </source>
</evidence>